<proteinExistence type="inferred from homology"/>
<organism>
    <name type="scientific">Alkalilimnicola ehrlichii (strain ATCC BAA-1101 / DSM 17681 / MLHE-1)</name>
    <dbReference type="NCBI Taxonomy" id="187272"/>
    <lineage>
        <taxon>Bacteria</taxon>
        <taxon>Pseudomonadati</taxon>
        <taxon>Pseudomonadota</taxon>
        <taxon>Gammaproteobacteria</taxon>
        <taxon>Chromatiales</taxon>
        <taxon>Ectothiorhodospiraceae</taxon>
        <taxon>Alkalilimnicola</taxon>
    </lineage>
</organism>
<accession>Q0A7L4</accession>
<keyword id="KW-0963">Cytoplasm</keyword>
<keyword id="KW-0378">Hydrolase</keyword>
<keyword id="KW-0479">Metal-binding</keyword>
<keyword id="KW-0547">Nucleotide-binding</keyword>
<keyword id="KW-1185">Reference proteome</keyword>
<sequence length="257" mass="27701">MMHILVSNDDGYQAPGILALAEALSEMARVTVVAPERDRSGASNSLTLDYPLRVHGTGPHRYRVEGTPTDCVHLAITGLLSEEPDMVVSGINAGANMGDDVLYSGTVAAATEGRFLGLPAIAISLNAFEPRHLATAARVAQLIVQRLSRDPLPSDTILNINVPDLPWHEVQGWEATRLGRRHRAEPVVRDEDPRGRAIYWIGPPGSEEDAGPGTDFYAVRNGYVSVTPIQVDLTRYTALDQVAGWVSGLGRPAEEGH</sequence>
<dbReference type="EC" id="3.1.3.5" evidence="1"/>
<dbReference type="EMBL" id="CP000453">
    <property type="protein sequence ID" value="ABI57173.1"/>
    <property type="molecule type" value="Genomic_DNA"/>
</dbReference>
<dbReference type="SMR" id="Q0A7L4"/>
<dbReference type="KEGG" id="aeh:Mlg_1829"/>
<dbReference type="eggNOG" id="COG0496">
    <property type="taxonomic scope" value="Bacteria"/>
</dbReference>
<dbReference type="HOGENOM" id="CLU_045192_1_2_6"/>
<dbReference type="OrthoDB" id="9780815at2"/>
<dbReference type="Proteomes" id="UP000001962">
    <property type="component" value="Chromosome"/>
</dbReference>
<dbReference type="GO" id="GO:0005737">
    <property type="term" value="C:cytoplasm"/>
    <property type="evidence" value="ECO:0007669"/>
    <property type="project" value="UniProtKB-SubCell"/>
</dbReference>
<dbReference type="GO" id="GO:0008254">
    <property type="term" value="F:3'-nucleotidase activity"/>
    <property type="evidence" value="ECO:0007669"/>
    <property type="project" value="TreeGrafter"/>
</dbReference>
<dbReference type="GO" id="GO:0008253">
    <property type="term" value="F:5'-nucleotidase activity"/>
    <property type="evidence" value="ECO:0007669"/>
    <property type="project" value="UniProtKB-UniRule"/>
</dbReference>
<dbReference type="GO" id="GO:0004309">
    <property type="term" value="F:exopolyphosphatase activity"/>
    <property type="evidence" value="ECO:0007669"/>
    <property type="project" value="TreeGrafter"/>
</dbReference>
<dbReference type="GO" id="GO:0046872">
    <property type="term" value="F:metal ion binding"/>
    <property type="evidence" value="ECO:0007669"/>
    <property type="project" value="UniProtKB-UniRule"/>
</dbReference>
<dbReference type="GO" id="GO:0000166">
    <property type="term" value="F:nucleotide binding"/>
    <property type="evidence" value="ECO:0007669"/>
    <property type="project" value="UniProtKB-KW"/>
</dbReference>
<dbReference type="FunFam" id="3.40.1210.10:FF:000001">
    <property type="entry name" value="5'/3'-nucleotidase SurE"/>
    <property type="match status" value="1"/>
</dbReference>
<dbReference type="Gene3D" id="3.40.1210.10">
    <property type="entry name" value="Survival protein SurE-like phosphatase/nucleotidase"/>
    <property type="match status" value="1"/>
</dbReference>
<dbReference type="HAMAP" id="MF_00060">
    <property type="entry name" value="SurE"/>
    <property type="match status" value="1"/>
</dbReference>
<dbReference type="InterPro" id="IPR030048">
    <property type="entry name" value="SurE"/>
</dbReference>
<dbReference type="InterPro" id="IPR002828">
    <property type="entry name" value="SurE-like_Pase/nucleotidase"/>
</dbReference>
<dbReference type="InterPro" id="IPR036523">
    <property type="entry name" value="SurE-like_sf"/>
</dbReference>
<dbReference type="NCBIfam" id="NF001489">
    <property type="entry name" value="PRK00346.1-3"/>
    <property type="match status" value="1"/>
</dbReference>
<dbReference type="NCBIfam" id="NF001490">
    <property type="entry name" value="PRK00346.1-4"/>
    <property type="match status" value="1"/>
</dbReference>
<dbReference type="NCBIfam" id="TIGR00087">
    <property type="entry name" value="surE"/>
    <property type="match status" value="1"/>
</dbReference>
<dbReference type="PANTHER" id="PTHR30457">
    <property type="entry name" value="5'-NUCLEOTIDASE SURE"/>
    <property type="match status" value="1"/>
</dbReference>
<dbReference type="PANTHER" id="PTHR30457:SF12">
    <property type="entry name" value="5'_3'-NUCLEOTIDASE SURE"/>
    <property type="match status" value="1"/>
</dbReference>
<dbReference type="Pfam" id="PF01975">
    <property type="entry name" value="SurE"/>
    <property type="match status" value="1"/>
</dbReference>
<dbReference type="SUPFAM" id="SSF64167">
    <property type="entry name" value="SurE-like"/>
    <property type="match status" value="1"/>
</dbReference>
<gene>
    <name evidence="1" type="primary">surE</name>
    <name type="ordered locus">Mlg_1829</name>
</gene>
<feature type="chain" id="PRO_0000335253" description="5'-nucleotidase SurE">
    <location>
        <begin position="1"/>
        <end position="257"/>
    </location>
</feature>
<feature type="binding site" evidence="1">
    <location>
        <position position="9"/>
    </location>
    <ligand>
        <name>a divalent metal cation</name>
        <dbReference type="ChEBI" id="CHEBI:60240"/>
    </ligand>
</feature>
<feature type="binding site" evidence="1">
    <location>
        <position position="10"/>
    </location>
    <ligand>
        <name>a divalent metal cation</name>
        <dbReference type="ChEBI" id="CHEBI:60240"/>
    </ligand>
</feature>
<feature type="binding site" evidence="1">
    <location>
        <position position="40"/>
    </location>
    <ligand>
        <name>a divalent metal cation</name>
        <dbReference type="ChEBI" id="CHEBI:60240"/>
    </ligand>
</feature>
<feature type="binding site" evidence="1">
    <location>
        <position position="92"/>
    </location>
    <ligand>
        <name>a divalent metal cation</name>
        <dbReference type="ChEBI" id="CHEBI:60240"/>
    </ligand>
</feature>
<protein>
    <recommendedName>
        <fullName evidence="1">5'-nucleotidase SurE</fullName>
        <ecNumber evidence="1">3.1.3.5</ecNumber>
    </recommendedName>
    <alternativeName>
        <fullName evidence="1">Nucleoside 5'-monophosphate phosphohydrolase</fullName>
    </alternativeName>
</protein>
<name>SURE_ALKEH</name>
<evidence type="ECO:0000255" key="1">
    <source>
        <dbReference type="HAMAP-Rule" id="MF_00060"/>
    </source>
</evidence>
<comment type="function">
    <text evidence="1">Nucleotidase that shows phosphatase activity on nucleoside 5'-monophosphates.</text>
</comment>
<comment type="catalytic activity">
    <reaction evidence="1">
        <text>a ribonucleoside 5'-phosphate + H2O = a ribonucleoside + phosphate</text>
        <dbReference type="Rhea" id="RHEA:12484"/>
        <dbReference type="ChEBI" id="CHEBI:15377"/>
        <dbReference type="ChEBI" id="CHEBI:18254"/>
        <dbReference type="ChEBI" id="CHEBI:43474"/>
        <dbReference type="ChEBI" id="CHEBI:58043"/>
        <dbReference type="EC" id="3.1.3.5"/>
    </reaction>
</comment>
<comment type="cofactor">
    <cofactor evidence="1">
        <name>a divalent metal cation</name>
        <dbReference type="ChEBI" id="CHEBI:60240"/>
    </cofactor>
    <text evidence="1">Binds 1 divalent metal cation per subunit.</text>
</comment>
<comment type="subcellular location">
    <subcellularLocation>
        <location evidence="1">Cytoplasm</location>
    </subcellularLocation>
</comment>
<comment type="similarity">
    <text evidence="1">Belongs to the SurE nucleotidase family.</text>
</comment>
<reference key="1">
    <citation type="submission" date="2006-08" db="EMBL/GenBank/DDBJ databases">
        <title>Complete sequence of Alkalilimnicola ehrilichei MLHE-1.</title>
        <authorList>
            <person name="Copeland A."/>
            <person name="Lucas S."/>
            <person name="Lapidus A."/>
            <person name="Barry K."/>
            <person name="Detter J.C."/>
            <person name="Glavina del Rio T."/>
            <person name="Hammon N."/>
            <person name="Israni S."/>
            <person name="Dalin E."/>
            <person name="Tice H."/>
            <person name="Pitluck S."/>
            <person name="Sims D."/>
            <person name="Brettin T."/>
            <person name="Bruce D."/>
            <person name="Han C."/>
            <person name="Tapia R."/>
            <person name="Gilna P."/>
            <person name="Schmutz J."/>
            <person name="Larimer F."/>
            <person name="Land M."/>
            <person name="Hauser L."/>
            <person name="Kyrpides N."/>
            <person name="Mikhailova N."/>
            <person name="Oremland R.S."/>
            <person name="Hoeft S.E."/>
            <person name="Switzer-Blum J."/>
            <person name="Kulp T."/>
            <person name="King G."/>
            <person name="Tabita R."/>
            <person name="Witte B."/>
            <person name="Santini J.M."/>
            <person name="Basu P."/>
            <person name="Hollibaugh J.T."/>
            <person name="Xie G."/>
            <person name="Stolz J.F."/>
            <person name="Richardson P."/>
        </authorList>
    </citation>
    <scope>NUCLEOTIDE SEQUENCE [LARGE SCALE GENOMIC DNA]</scope>
    <source>
        <strain>ATCC BAA-1101 / DSM 17681 / MLHE-1</strain>
    </source>
</reference>